<organism>
    <name type="scientific">Saccharomyces cerevisiae killer virus M1</name>
    <name type="common">ScV-M1</name>
    <name type="synonym">Saccharomyces cerevisiae virus M1</name>
    <dbReference type="NCBI Taxonomy" id="12450"/>
    <lineage>
        <taxon>Viruses</taxon>
        <taxon>Riboviria</taxon>
        <taxon>dsRNA viruses</taxon>
    </lineage>
</organism>
<accession>P01546</accession>
<keyword id="KW-0165">Cleavage on pair of basic residues</keyword>
<keyword id="KW-1015">Disulfide bond</keyword>
<keyword id="KW-0325">Glycoprotein</keyword>
<keyword id="KW-1043">Host membrane</keyword>
<keyword id="KW-0430">Lectin</keyword>
<keyword id="KW-0472">Membrane</keyword>
<keyword id="KW-1185">Reference proteome</keyword>
<keyword id="KW-0964">Secreted</keyword>
<keyword id="KW-0732">Signal</keyword>
<keyword id="KW-0800">Toxin</keyword>
<keyword id="KW-0812">Transmembrane</keyword>
<keyword id="KW-1133">Transmembrane helix</keyword>
<protein>
    <recommendedName>
        <fullName>M1-1 protoxin</fullName>
    </recommendedName>
    <alternativeName>
        <fullName>Killer toxin K1</fullName>
    </alternativeName>
    <component>
        <recommendedName>
            <fullName>M1-1 delta chain</fullName>
        </recommendedName>
    </component>
    <component>
        <recommendedName>
            <fullName>M1-1 alpha chain</fullName>
        </recommendedName>
    </component>
    <component>
        <recommendedName>
            <fullName>M1-1 gamma immunity chain</fullName>
        </recommendedName>
    </component>
    <component>
        <recommendedName>
            <fullName>M1-1 beta chain</fullName>
        </recommendedName>
    </component>
</protein>
<proteinExistence type="evidence at transcript level"/>
<organismHost>
    <name type="scientific">Saccharomyces cerevisiae</name>
    <name type="common">Baker's yeast</name>
    <dbReference type="NCBI Taxonomy" id="4932"/>
</organismHost>
<dbReference type="EMBL" id="K02042">
    <property type="protein sequence ID" value="AAA34748.1"/>
    <property type="molecule type" value="mRNA"/>
</dbReference>
<dbReference type="EMBL" id="X00285">
    <property type="protein sequence ID" value="CAA25078.1"/>
    <property type="molecule type" value="mRNA"/>
</dbReference>
<dbReference type="EMBL" id="X00285">
    <property type="protein sequence ID" value="CAA25079.1"/>
    <property type="molecule type" value="mRNA"/>
</dbReference>
<dbReference type="EMBL" id="U78817">
    <property type="protein sequence ID" value="AAC58005.1"/>
    <property type="molecule type" value="Genomic_RNA"/>
</dbReference>
<dbReference type="RefSeq" id="NP_044402.1">
    <property type="nucleotide sequence ID" value="NC_001782.1"/>
</dbReference>
<dbReference type="TCDB" id="1.C.6.1.1">
    <property type="family name" value="the yeast killer toxin k1 (ykt-k1) family"/>
</dbReference>
<dbReference type="GeneID" id="1494398"/>
<dbReference type="KEGG" id="vg:1494398"/>
<dbReference type="Proteomes" id="UP000243666">
    <property type="component" value="Genome"/>
</dbReference>
<dbReference type="GO" id="GO:0005576">
    <property type="term" value="C:extracellular region"/>
    <property type="evidence" value="ECO:0007669"/>
    <property type="project" value="UniProtKB-SubCell"/>
</dbReference>
<dbReference type="GO" id="GO:0033644">
    <property type="term" value="C:host cell membrane"/>
    <property type="evidence" value="ECO:0007669"/>
    <property type="project" value="UniProtKB-SubCell"/>
</dbReference>
<dbReference type="GO" id="GO:0016020">
    <property type="term" value="C:membrane"/>
    <property type="evidence" value="ECO:0007669"/>
    <property type="project" value="UniProtKB-KW"/>
</dbReference>
<dbReference type="GO" id="GO:0030246">
    <property type="term" value="F:carbohydrate binding"/>
    <property type="evidence" value="ECO:0007669"/>
    <property type="project" value="UniProtKB-KW"/>
</dbReference>
<dbReference type="GO" id="GO:0090729">
    <property type="term" value="F:toxin activity"/>
    <property type="evidence" value="ECO:0007669"/>
    <property type="project" value="UniProtKB-KW"/>
</dbReference>
<comment type="function">
    <text evidence="3">Ionophoric toxin secreted by an infected host and lethal to non-infected sensitive strains. Cell killing is achieved in a receptor-mediated process, requiring initial toxin binding to a cell wall (1-&gt;6)-beta-D-glucan and, probably, subsequent transfer to a plasma membrane receptor. K1 toxin disrupts the cell by creating a pore across the target cell membrane.</text>
</comment>
<comment type="subunit">
    <text>The secreted toxin contains alpha and beta chains that are linked by three disulfide bonds.</text>
</comment>
<comment type="subcellular location">
    <subcellularLocation>
        <location>Secreted</location>
    </subcellularLocation>
    <subcellularLocation>
        <location evidence="4">Host membrane</location>
        <topology evidence="4">Multi-pass membrane protein</topology>
    </subcellularLocation>
    <text evidence="4">Pore-forming in target cell.</text>
</comment>
<comment type="miscellaneous">
    <text>The killer phenotype requires the presence of two different dsRNA viruses: an L-A helper virus and the toxin-coding (M) killer virus. Killer strains of S.cerevisiae producing the toxin K1 kill sensitive cells but are resistant to their own toxin. The gamma and delta chains may play a role, on there own or as part of the protoxin, in the self-protection of the virus-infected killer yeast (toxin immunity).</text>
</comment>
<name>M11P_SCVM1</name>
<reference key="1">
    <citation type="journal article" date="1984" name="Cell">
        <title>Sequence of the preprotoxin dsRNA gene of type I killer yeast: multiple processing events produce a two-component toxin.</title>
        <authorList>
            <person name="Bostian K.A."/>
            <person name="Elliott Q."/>
            <person name="Bussey H."/>
            <person name="Burn V."/>
            <person name="Smith A."/>
            <person name="Tipper D.J."/>
        </authorList>
    </citation>
    <scope>NUCLEOTIDE SEQUENCE [MRNA]</scope>
</reference>
<reference key="2">
    <citation type="journal article" date="1984" name="EMBO J.">
        <title>Cloning and sequencing of the preprotoxin-coding region of the yeast M1 double-stranded RNA.</title>
        <authorList>
            <person name="Skipper N."/>
            <person name="Thomas D.Y."/>
            <person name="Lau P.C.K."/>
        </authorList>
    </citation>
    <scope>NUCLEOTIDE SEQUENCE [MRNA]</scope>
</reference>
<reference key="3">
    <citation type="journal article" date="1997" name="Yeast">
        <title>Cloning, sequencing and expression of a full-length cDNA copy of the M1 double-stranded RNA virus from the yeast, Saccharomyces cerevisiae.</title>
        <authorList>
            <person name="Russell P.J."/>
            <person name="Bennett A.M."/>
            <person name="Love Z."/>
            <person name="Baggott D.M."/>
        </authorList>
    </citation>
    <scope>NUCLEOTIDE SEQUENCE [MRNA]</scope>
    <source>
        <strain>TF325</strain>
    </source>
</reference>
<reference key="4">
    <citation type="journal article" date="1990" name="Proc. Natl. Acad. Sci. U.S.A.">
        <title>Yeast K1 killer toxin forms ion channels in sensitive yeast spheroplasts and in artificial liposomes.</title>
        <authorList>
            <person name="Martinac B."/>
            <person name="Zhu H."/>
            <person name="Kubalski A."/>
            <person name="Zhou X.L."/>
            <person name="Culbertson M."/>
            <person name="Bussey H."/>
            <person name="Kung C."/>
        </authorList>
    </citation>
    <scope>FUNCTION</scope>
</reference>
<reference key="5">
    <citation type="journal article" date="2008" name="Biochim. Biophys. Acta">
        <title>Viral induced yeast apoptosis.</title>
        <authorList>
            <person name="Schmitt M.J."/>
            <person name="Reiter J."/>
        </authorList>
    </citation>
    <scope>REVIEW</scope>
</reference>
<feature type="signal peptide">
    <location>
        <begin position="1"/>
        <end position="26"/>
    </location>
</feature>
<feature type="chain" id="PRO_0000041343" description="M1-1 protoxin">
    <location>
        <begin position="27"/>
        <end position="316"/>
    </location>
</feature>
<feature type="chain" id="PRO_0000041344" description="M1-1 delta chain">
    <location>
        <begin position="27"/>
        <end position="44"/>
    </location>
</feature>
<feature type="chain" id="PRO_0000041345" description="M1-1 alpha chain">
    <location>
        <begin position="45"/>
        <end position="147"/>
    </location>
</feature>
<feature type="chain" id="PRO_0000041346" description="M1-1 gamma immunity chain">
    <location>
        <begin position="150"/>
        <end position="233"/>
    </location>
</feature>
<feature type="chain" id="PRO_0000041347" description="M1-1 beta chain">
    <location>
        <begin position="234"/>
        <end position="316"/>
    </location>
</feature>
<feature type="transmembrane region" description="Helical" evidence="2">
    <location>
        <begin position="72"/>
        <end position="92"/>
    </location>
</feature>
<feature type="transmembrane region" description="Helical" evidence="2">
    <location>
        <begin position="112"/>
        <end position="132"/>
    </location>
</feature>
<feature type="glycosylation site" description="N-linked (GlcNAc...) asparagine; by host" evidence="2">
    <location>
        <position position="181"/>
    </location>
</feature>
<feature type="glycosylation site" description="N-linked (GlcNAc...) asparagine; by host" evidence="2">
    <location>
        <position position="203"/>
    </location>
</feature>
<feature type="glycosylation site" description="N-linked (GlcNAc...) asparagine; by host" evidence="2">
    <location>
        <position position="216"/>
    </location>
</feature>
<feature type="disulfide bond" evidence="1">
    <location>
        <begin position="92"/>
        <end position="248"/>
    </location>
</feature>
<feature type="disulfide bond" evidence="1">
    <location>
        <begin position="95"/>
        <end position="312"/>
    </location>
</feature>
<feature type="disulfide bond" evidence="1">
    <location>
        <begin position="107"/>
        <end position="239"/>
    </location>
</feature>
<feature type="sequence conflict" description="In Ref. 2; CAA25078." evidence="4" ref="2">
    <original>I</original>
    <variation>S</variation>
    <location>
        <position position="103"/>
    </location>
</feature>
<feature type="sequence conflict" description="In Ref. 2; CAA25078." evidence="4" ref="2">
    <original>T</original>
    <variation>A</variation>
    <location>
        <position position="123"/>
    </location>
</feature>
<sequence length="316" mass="34826">MTKPTQVLVRSVSILFFITLLHLVVALNDVAGPAETAPVSLLPREAPWYDKIWEVKDWLLQRATDGNWGKSITWGSFVASDAGVVIFGINVCKNCVGERKDDISTDCGKQTLALLVSIFVAVTSGHHLIWGGNRPVSQSDPNGATVARRDISTVADGDIPLDFSALNDILNEHGISILPANASQYVKRSDTAEHTTSFVVTNNYTSLHTDLIHHGNGTYTTFTTPHIPAVAKRYVYPMCEHGIKASYCMALNDAMVSANGNLYGLAEKLFSEDEGQWETNYYKLYWSTGQWIMSMKFIEESIDNANNDFEGCDTGH</sequence>
<evidence type="ECO:0000250" key="1"/>
<evidence type="ECO:0000255" key="2"/>
<evidence type="ECO:0000269" key="3">
    <source>
    </source>
</evidence>
<evidence type="ECO:0000305" key="4"/>